<gene>
    <name type="primary">MACO1</name>
    <name type="synonym">TMEM57</name>
</gene>
<proteinExistence type="evidence at transcript level"/>
<sequence>MKRRNADCSKLRRPLKRNRITEGIYGSTFLYLKFLVVWALVLLADFVLEFRFEYLWPFWLFIRSVYDSFRYQGLAFSVFFVCVAFTSNIICLLFIPIQWLFFAASTYVWVQYVWHTERGVCLPTVSLWILFVYIEAAIRFKDLKNFHVDLCRPFAAHCIGYPVVTLGFGFKSYVSYKMRLRKQKEVQKENEFYMQLLQQALPPEQQMLQKQEKEAEEAAKGLPDMDSSILIHHNGGIPANKKLSTTLPEIEYREKGKEKDKDAKKHNLGINNNNILQPVDSKIQEIEYMENHINSKRLNNDLVGSTENLLKEDSCTASSKNYKNASGVVNSSPRSHSATNGSIPSSSSKNEKKQKCTSKSPSAHKDLMENCIPNNQLSKPDALVRLEQDIKKLKADLQASRQVEQELRSQISSLSSTERGIRSEMGQLRQENELLQNKLHNAVQMKQKDKQNISQLEKKLKAEQEARSFVEKQLMEEKKRKKLEEATAARAVAFAAASRGECTETLRNRIRELEAEGKKLTMDMKVKEDQIRELELKVQELRKYKENEKDTEVLMSALSAMQDKTQHLENSLSAETRIKLDLFSALGDAKRQLEIAQGQILQKDQEIKDLKQKIAEVMAVMPSITYSAATSPLSPVSPHYSSKFVETSPSGLDPNASVYQPLKK</sequence>
<name>MACOI_PIG</name>
<reference key="1">
    <citation type="submission" date="2004-12" db="EMBL/GenBank/DDBJ databases">
        <title>Identification of macoilin as a novel membrane-associated coiled-coil tetraspanin protein.</title>
        <authorList>
            <person name="Huang C.-H."/>
            <person name="Chen Y."/>
        </authorList>
    </citation>
    <scope>NUCLEOTIDE SEQUENCE [MRNA]</scope>
</reference>
<organism>
    <name type="scientific">Sus scrofa</name>
    <name type="common">Pig</name>
    <dbReference type="NCBI Taxonomy" id="9823"/>
    <lineage>
        <taxon>Eukaryota</taxon>
        <taxon>Metazoa</taxon>
        <taxon>Chordata</taxon>
        <taxon>Craniata</taxon>
        <taxon>Vertebrata</taxon>
        <taxon>Euteleostomi</taxon>
        <taxon>Mammalia</taxon>
        <taxon>Eutheria</taxon>
        <taxon>Laurasiatheria</taxon>
        <taxon>Artiodactyla</taxon>
        <taxon>Suina</taxon>
        <taxon>Suidae</taxon>
        <taxon>Sus</taxon>
    </lineage>
</organism>
<evidence type="ECO:0000250" key="1">
    <source>
        <dbReference type="UniProtKB" id="P91193"/>
    </source>
</evidence>
<evidence type="ECO:0000250" key="2">
    <source>
        <dbReference type="UniProtKB" id="Q7TQE6"/>
    </source>
</evidence>
<evidence type="ECO:0000250" key="3">
    <source>
        <dbReference type="UniProtKB" id="Q8N5G2"/>
    </source>
</evidence>
<evidence type="ECO:0000255" key="4"/>
<evidence type="ECO:0000256" key="5">
    <source>
        <dbReference type="SAM" id="MobiDB-lite"/>
    </source>
</evidence>
<evidence type="ECO:0000305" key="6"/>
<accession>Q2TLZ2</accession>
<comment type="function">
    <text evidence="3">Plays a role in the regulation of neuronal activity.</text>
</comment>
<comment type="subcellular location">
    <subcellularLocation>
        <location evidence="1">Rough endoplasmic reticulum membrane</location>
        <topology evidence="4">Multi-pass membrane protein</topology>
    </subcellularLocation>
    <subcellularLocation>
        <location evidence="1">Nucleus membrane</location>
        <topology evidence="4">Multi-pass membrane protein</topology>
    </subcellularLocation>
    <text evidence="2">Detected in the nucleus membrane of non-neuronal cells and in axonal outgrowths of neuronal cells.</text>
</comment>
<comment type="similarity">
    <text evidence="6">Belongs to the macoilin family.</text>
</comment>
<dbReference type="EMBL" id="AY845019">
    <property type="protein sequence ID" value="AAX11917.1"/>
    <property type="molecule type" value="mRNA"/>
</dbReference>
<dbReference type="RefSeq" id="NP_001033735.1">
    <property type="nucleotide sequence ID" value="NM_001038646.1"/>
</dbReference>
<dbReference type="SMR" id="Q2TLZ2"/>
<dbReference type="FunCoup" id="Q2TLZ2">
    <property type="interactions" value="2614"/>
</dbReference>
<dbReference type="STRING" id="9823.ENSSSCP00000019457"/>
<dbReference type="GlyCosmos" id="Q2TLZ2">
    <property type="glycosylation" value="4 sites, No reported glycans"/>
</dbReference>
<dbReference type="GlyGen" id="Q2TLZ2">
    <property type="glycosylation" value="4 sites"/>
</dbReference>
<dbReference type="PaxDb" id="9823-ENSSSCP00000019457"/>
<dbReference type="Ensembl" id="ENSSSCT00000029593.4">
    <property type="protein sequence ID" value="ENSSSCP00000019457.2"/>
    <property type="gene ID" value="ENSSSCG00000030682.4"/>
</dbReference>
<dbReference type="Ensembl" id="ENSSSCT00025024867.1">
    <property type="protein sequence ID" value="ENSSSCP00025010510.1"/>
    <property type="gene ID" value="ENSSSCG00025018316.1"/>
</dbReference>
<dbReference type="Ensembl" id="ENSSSCT00030066356.1">
    <property type="protein sequence ID" value="ENSSSCP00030030393.1"/>
    <property type="gene ID" value="ENSSSCG00030047510.1"/>
</dbReference>
<dbReference type="Ensembl" id="ENSSSCT00035106731.1">
    <property type="protein sequence ID" value="ENSSSCP00035046021.1"/>
    <property type="gene ID" value="ENSSSCG00035078218.1"/>
</dbReference>
<dbReference type="Ensembl" id="ENSSSCT00040103374.1">
    <property type="protein sequence ID" value="ENSSSCP00040046831.1"/>
    <property type="gene ID" value="ENSSSCG00040074721.1"/>
</dbReference>
<dbReference type="Ensembl" id="ENSSSCT00045067058.1">
    <property type="protein sequence ID" value="ENSSSCP00045047623.1"/>
    <property type="gene ID" value="ENSSSCG00045038631.1"/>
</dbReference>
<dbReference type="Ensembl" id="ENSSSCT00050075781.1">
    <property type="protein sequence ID" value="ENSSSCP00050032682.1"/>
    <property type="gene ID" value="ENSSSCG00050055532.1"/>
</dbReference>
<dbReference type="Ensembl" id="ENSSSCT00055039290.1">
    <property type="protein sequence ID" value="ENSSSCP00055031248.1"/>
    <property type="gene ID" value="ENSSSCG00055020033.1"/>
</dbReference>
<dbReference type="Ensembl" id="ENSSSCT00060014169.1">
    <property type="protein sequence ID" value="ENSSSCP00060005463.1"/>
    <property type="gene ID" value="ENSSSCG00060010886.1"/>
</dbReference>
<dbReference type="Ensembl" id="ENSSSCT00065004539.1">
    <property type="protein sequence ID" value="ENSSSCP00065001916.1"/>
    <property type="gene ID" value="ENSSSCG00065003345.1"/>
</dbReference>
<dbReference type="Ensembl" id="ENSSSCT00105052332">
    <property type="protein sequence ID" value="ENSSSCP00105036813"/>
    <property type="gene ID" value="ENSSSCG00105027543"/>
</dbReference>
<dbReference type="Ensembl" id="ENSSSCT00110016436">
    <property type="protein sequence ID" value="ENSSSCP00110011401"/>
    <property type="gene ID" value="ENSSSCG00110008491"/>
</dbReference>
<dbReference type="Ensembl" id="ENSSSCT00115033840">
    <property type="protein sequence ID" value="ENSSSCP00115032118"/>
    <property type="gene ID" value="ENSSSCG00115019127"/>
</dbReference>
<dbReference type="Ensembl" id="ENSSSCT00130062496">
    <property type="protein sequence ID" value="ENSSSCP00130044770"/>
    <property type="gene ID" value="ENSSSCG00130032006"/>
</dbReference>
<dbReference type="GeneID" id="654414"/>
<dbReference type="KEGG" id="ssc:654414"/>
<dbReference type="CTD" id="55219"/>
<dbReference type="VGNC" id="VGNC:98497">
    <property type="gene designation" value="MACO1"/>
</dbReference>
<dbReference type="eggNOG" id="KOG1821">
    <property type="taxonomic scope" value="Eukaryota"/>
</dbReference>
<dbReference type="GeneTree" id="ENSGT00390000016613"/>
<dbReference type="InParanoid" id="Q2TLZ2"/>
<dbReference type="OMA" id="ENTHADT"/>
<dbReference type="OrthoDB" id="10071111at2759"/>
<dbReference type="Reactome" id="R-SSC-8980692">
    <property type="pathway name" value="RHOA GTPase cycle"/>
</dbReference>
<dbReference type="Reactome" id="R-SSC-9013106">
    <property type="pathway name" value="RHOC GTPase cycle"/>
</dbReference>
<dbReference type="Proteomes" id="UP000008227">
    <property type="component" value="Chromosome 6"/>
</dbReference>
<dbReference type="Proteomes" id="UP000314985">
    <property type="component" value="Unplaced"/>
</dbReference>
<dbReference type="Proteomes" id="UP000694570">
    <property type="component" value="Unplaced"/>
</dbReference>
<dbReference type="Proteomes" id="UP000694571">
    <property type="component" value="Unplaced"/>
</dbReference>
<dbReference type="Proteomes" id="UP000694720">
    <property type="component" value="Unplaced"/>
</dbReference>
<dbReference type="Proteomes" id="UP000694722">
    <property type="component" value="Unplaced"/>
</dbReference>
<dbReference type="Proteomes" id="UP000694723">
    <property type="component" value="Unplaced"/>
</dbReference>
<dbReference type="Proteomes" id="UP000694724">
    <property type="component" value="Unplaced"/>
</dbReference>
<dbReference type="Proteomes" id="UP000694725">
    <property type="component" value="Unplaced"/>
</dbReference>
<dbReference type="Proteomes" id="UP000694726">
    <property type="component" value="Unplaced"/>
</dbReference>
<dbReference type="Proteomes" id="UP000694727">
    <property type="component" value="Unplaced"/>
</dbReference>
<dbReference type="Proteomes" id="UP000694728">
    <property type="component" value="Unplaced"/>
</dbReference>
<dbReference type="Bgee" id="ENSSSCG00000030682">
    <property type="expression patterns" value="Expressed in testis and 45 other cell types or tissues"/>
</dbReference>
<dbReference type="ExpressionAtlas" id="Q2TLZ2">
    <property type="expression patterns" value="baseline and differential"/>
</dbReference>
<dbReference type="GO" id="GO:0030424">
    <property type="term" value="C:axon"/>
    <property type="evidence" value="ECO:0007669"/>
    <property type="project" value="Ensembl"/>
</dbReference>
<dbReference type="GO" id="GO:0044306">
    <property type="term" value="C:neuron projection terminus"/>
    <property type="evidence" value="ECO:0007669"/>
    <property type="project" value="Ensembl"/>
</dbReference>
<dbReference type="GO" id="GO:0031965">
    <property type="term" value="C:nuclear membrane"/>
    <property type="evidence" value="ECO:0000318"/>
    <property type="project" value="GO_Central"/>
</dbReference>
<dbReference type="GO" id="GO:0030867">
    <property type="term" value="C:rough endoplasmic reticulum membrane"/>
    <property type="evidence" value="ECO:0000250"/>
    <property type="project" value="UniProtKB"/>
</dbReference>
<dbReference type="GO" id="GO:0045202">
    <property type="term" value="C:synapse"/>
    <property type="evidence" value="ECO:0007669"/>
    <property type="project" value="Ensembl"/>
</dbReference>
<dbReference type="GO" id="GO:0008017">
    <property type="term" value="F:microtubule binding"/>
    <property type="evidence" value="ECO:0000318"/>
    <property type="project" value="GO_Central"/>
</dbReference>
<dbReference type="GO" id="GO:0007420">
    <property type="term" value="P:brain development"/>
    <property type="evidence" value="ECO:0007669"/>
    <property type="project" value="Ensembl"/>
</dbReference>
<dbReference type="GO" id="GO:0006935">
    <property type="term" value="P:chemotaxis"/>
    <property type="evidence" value="ECO:0000318"/>
    <property type="project" value="GO_Central"/>
</dbReference>
<dbReference type="GO" id="GO:0023041">
    <property type="term" value="P:neuronal signal transduction"/>
    <property type="evidence" value="ECO:0000250"/>
    <property type="project" value="UniProtKB"/>
</dbReference>
<dbReference type="InterPro" id="IPR019130">
    <property type="entry name" value="Macoilin"/>
</dbReference>
<dbReference type="PANTHER" id="PTHR47464">
    <property type="entry name" value="MACOILIN"/>
    <property type="match status" value="1"/>
</dbReference>
<dbReference type="PANTHER" id="PTHR47464:SF2">
    <property type="entry name" value="MACOILIN"/>
    <property type="match status" value="1"/>
</dbReference>
<dbReference type="Pfam" id="PF09726">
    <property type="entry name" value="Macoilin"/>
    <property type="match status" value="1"/>
</dbReference>
<protein>
    <recommendedName>
        <fullName>Macoilin</fullName>
    </recommendedName>
    <alternativeName>
        <fullName>Macoilin-1</fullName>
    </alternativeName>
    <alternativeName>
        <fullName>Transmembrane protein 57</fullName>
    </alternativeName>
</protein>
<keyword id="KW-0256">Endoplasmic reticulum</keyword>
<keyword id="KW-0325">Glycoprotein</keyword>
<keyword id="KW-0472">Membrane</keyword>
<keyword id="KW-0539">Nucleus</keyword>
<keyword id="KW-0597">Phosphoprotein</keyword>
<keyword id="KW-1185">Reference proteome</keyword>
<keyword id="KW-0812">Transmembrane</keyword>
<keyword id="KW-1133">Transmembrane helix</keyword>
<feature type="chain" id="PRO_0000070270" description="Macoilin">
    <location>
        <begin position="1"/>
        <end position="664"/>
    </location>
</feature>
<feature type="transmembrane region" description="Helical" evidence="4">
    <location>
        <begin position="28"/>
        <end position="48"/>
    </location>
</feature>
<feature type="transmembrane region" description="Helical" evidence="4">
    <location>
        <begin position="75"/>
        <end position="95"/>
    </location>
</feature>
<feature type="transmembrane region" description="Helical" evidence="4">
    <location>
        <begin position="120"/>
        <end position="140"/>
    </location>
</feature>
<feature type="transmembrane region" description="Helical" evidence="4">
    <location>
        <begin position="154"/>
        <end position="174"/>
    </location>
</feature>
<feature type="region of interest" description="Disordered" evidence="5">
    <location>
        <begin position="253"/>
        <end position="274"/>
    </location>
</feature>
<feature type="region of interest" description="Disordered" evidence="5">
    <location>
        <begin position="320"/>
        <end position="367"/>
    </location>
</feature>
<feature type="region of interest" description="Disordered" evidence="5">
    <location>
        <begin position="630"/>
        <end position="664"/>
    </location>
</feature>
<feature type="compositionally biased region" description="Basic and acidic residues" evidence="5">
    <location>
        <begin position="253"/>
        <end position="265"/>
    </location>
</feature>
<feature type="compositionally biased region" description="Polar residues" evidence="5">
    <location>
        <begin position="320"/>
        <end position="348"/>
    </location>
</feature>
<feature type="modified residue" description="Phosphoserine" evidence="3">
    <location>
        <position position="305"/>
    </location>
</feature>
<feature type="modified residue" description="Phosphoserine" evidence="3">
    <location>
        <position position="332"/>
    </location>
</feature>
<feature type="modified residue" description="Phosphoserine" evidence="3">
    <location>
        <position position="631"/>
    </location>
</feature>
<feature type="modified residue" description="Phosphoserine" evidence="3">
    <location>
        <position position="634"/>
    </location>
</feature>
<feature type="glycosylation site" description="N-linked (GlcNAc...) asparagine" evidence="4">
    <location>
        <position position="324"/>
    </location>
</feature>
<feature type="glycosylation site" description="N-linked (GlcNAc...) asparagine" evidence="4">
    <location>
        <position position="340"/>
    </location>
</feature>
<feature type="glycosylation site" description="N-linked (GlcNAc...) asparagine" evidence="4">
    <location>
        <position position="452"/>
    </location>
</feature>
<feature type="glycosylation site" description="N-linked (GlcNAc...) asparagine" evidence="4">
    <location>
        <position position="655"/>
    </location>
</feature>